<reference key="1">
    <citation type="submission" date="2007-06" db="EMBL/GenBank/DDBJ databases">
        <title>Complete sequence of Marinomonas sp. MWYL1.</title>
        <authorList>
            <consortium name="US DOE Joint Genome Institute"/>
            <person name="Copeland A."/>
            <person name="Lucas S."/>
            <person name="Lapidus A."/>
            <person name="Barry K."/>
            <person name="Glavina del Rio T."/>
            <person name="Dalin E."/>
            <person name="Tice H."/>
            <person name="Pitluck S."/>
            <person name="Kiss H."/>
            <person name="Brettin T."/>
            <person name="Bruce D."/>
            <person name="Detter J.C."/>
            <person name="Han C."/>
            <person name="Schmutz J."/>
            <person name="Larimer F."/>
            <person name="Land M."/>
            <person name="Hauser L."/>
            <person name="Kyrpides N."/>
            <person name="Kim E."/>
            <person name="Johnston A.W.B."/>
            <person name="Todd J.D."/>
            <person name="Rogers R."/>
            <person name="Wexler M."/>
            <person name="Bond P.L."/>
            <person name="Li Y."/>
            <person name="Richardson P."/>
        </authorList>
    </citation>
    <scope>NUCLEOTIDE SEQUENCE [LARGE SCALE GENOMIC DNA]</scope>
    <source>
        <strain>MWYL1</strain>
    </source>
</reference>
<protein>
    <recommendedName>
        <fullName evidence="1">Ribosomal RNA large subunit methyltransferase H</fullName>
        <ecNumber evidence="1">2.1.1.177</ecNumber>
    </recommendedName>
    <alternativeName>
        <fullName evidence="1">23S rRNA (pseudouridine1915-N3)-methyltransferase</fullName>
    </alternativeName>
    <alternativeName>
        <fullName evidence="1">23S rRNA m3Psi1915 methyltransferase</fullName>
    </alternativeName>
    <alternativeName>
        <fullName evidence="1">rRNA (pseudouridine-N3-)-methyltransferase RlmH</fullName>
    </alternativeName>
</protein>
<gene>
    <name evidence="1" type="primary">rlmH</name>
    <name type="ordered locus">Mmwyl1_2849</name>
</gene>
<comment type="function">
    <text evidence="1">Specifically methylates the pseudouridine at position 1915 (m3Psi1915) in 23S rRNA.</text>
</comment>
<comment type="catalytic activity">
    <reaction evidence="1">
        <text>pseudouridine(1915) in 23S rRNA + S-adenosyl-L-methionine = N(3)-methylpseudouridine(1915) in 23S rRNA + S-adenosyl-L-homocysteine + H(+)</text>
        <dbReference type="Rhea" id="RHEA:42752"/>
        <dbReference type="Rhea" id="RHEA-COMP:10221"/>
        <dbReference type="Rhea" id="RHEA-COMP:10222"/>
        <dbReference type="ChEBI" id="CHEBI:15378"/>
        <dbReference type="ChEBI" id="CHEBI:57856"/>
        <dbReference type="ChEBI" id="CHEBI:59789"/>
        <dbReference type="ChEBI" id="CHEBI:65314"/>
        <dbReference type="ChEBI" id="CHEBI:74486"/>
        <dbReference type="EC" id="2.1.1.177"/>
    </reaction>
</comment>
<comment type="subunit">
    <text evidence="1">Homodimer.</text>
</comment>
<comment type="subcellular location">
    <subcellularLocation>
        <location evidence="1">Cytoplasm</location>
    </subcellularLocation>
</comment>
<comment type="similarity">
    <text evidence="1">Belongs to the RNA methyltransferase RlmH family.</text>
</comment>
<feature type="chain" id="PRO_1000082808" description="Ribosomal RNA large subunit methyltransferase H">
    <location>
        <begin position="1"/>
        <end position="155"/>
    </location>
</feature>
<feature type="binding site" evidence="1">
    <location>
        <position position="104"/>
    </location>
    <ligand>
        <name>S-adenosyl-L-methionine</name>
        <dbReference type="ChEBI" id="CHEBI:59789"/>
    </ligand>
</feature>
<feature type="binding site" evidence="1">
    <location>
        <begin position="123"/>
        <end position="128"/>
    </location>
    <ligand>
        <name>S-adenosyl-L-methionine</name>
        <dbReference type="ChEBI" id="CHEBI:59789"/>
    </ligand>
</feature>
<name>RLMH_MARMS</name>
<keyword id="KW-0963">Cytoplasm</keyword>
<keyword id="KW-0489">Methyltransferase</keyword>
<keyword id="KW-0698">rRNA processing</keyword>
<keyword id="KW-0949">S-adenosyl-L-methionine</keyword>
<keyword id="KW-0808">Transferase</keyword>
<dbReference type="EC" id="2.1.1.177" evidence="1"/>
<dbReference type="EMBL" id="CP000749">
    <property type="protein sequence ID" value="ABR71761.1"/>
    <property type="molecule type" value="Genomic_DNA"/>
</dbReference>
<dbReference type="SMR" id="A6VZ82"/>
<dbReference type="STRING" id="400668.Mmwyl1_2849"/>
<dbReference type="KEGG" id="mmw:Mmwyl1_2849"/>
<dbReference type="eggNOG" id="COG1576">
    <property type="taxonomic scope" value="Bacteria"/>
</dbReference>
<dbReference type="HOGENOM" id="CLU_100552_1_0_6"/>
<dbReference type="OrthoDB" id="9806643at2"/>
<dbReference type="GO" id="GO:0005737">
    <property type="term" value="C:cytoplasm"/>
    <property type="evidence" value="ECO:0007669"/>
    <property type="project" value="UniProtKB-SubCell"/>
</dbReference>
<dbReference type="GO" id="GO:0070038">
    <property type="term" value="F:rRNA (pseudouridine-N3-)-methyltransferase activity"/>
    <property type="evidence" value="ECO:0007669"/>
    <property type="project" value="UniProtKB-UniRule"/>
</dbReference>
<dbReference type="CDD" id="cd18081">
    <property type="entry name" value="RlmH-like"/>
    <property type="match status" value="1"/>
</dbReference>
<dbReference type="Gene3D" id="3.40.1280.10">
    <property type="match status" value="1"/>
</dbReference>
<dbReference type="HAMAP" id="MF_00658">
    <property type="entry name" value="23SrRNA_methyltr_H"/>
    <property type="match status" value="1"/>
</dbReference>
<dbReference type="InterPro" id="IPR029028">
    <property type="entry name" value="Alpha/beta_knot_MTases"/>
</dbReference>
<dbReference type="InterPro" id="IPR003742">
    <property type="entry name" value="RlmH-like"/>
</dbReference>
<dbReference type="InterPro" id="IPR029026">
    <property type="entry name" value="tRNA_m1G_MTases_N"/>
</dbReference>
<dbReference type="NCBIfam" id="NF000986">
    <property type="entry name" value="PRK00103.1-4"/>
    <property type="match status" value="1"/>
</dbReference>
<dbReference type="NCBIfam" id="TIGR00246">
    <property type="entry name" value="tRNA_RlmH_YbeA"/>
    <property type="match status" value="1"/>
</dbReference>
<dbReference type="PANTHER" id="PTHR33603">
    <property type="entry name" value="METHYLTRANSFERASE"/>
    <property type="match status" value="1"/>
</dbReference>
<dbReference type="PANTHER" id="PTHR33603:SF1">
    <property type="entry name" value="RIBOSOMAL RNA LARGE SUBUNIT METHYLTRANSFERASE H"/>
    <property type="match status" value="1"/>
</dbReference>
<dbReference type="Pfam" id="PF02590">
    <property type="entry name" value="SPOUT_MTase"/>
    <property type="match status" value="1"/>
</dbReference>
<dbReference type="PIRSF" id="PIRSF004505">
    <property type="entry name" value="MT_bac"/>
    <property type="match status" value="1"/>
</dbReference>
<dbReference type="SUPFAM" id="SSF75217">
    <property type="entry name" value="alpha/beta knot"/>
    <property type="match status" value="1"/>
</dbReference>
<evidence type="ECO:0000255" key="1">
    <source>
        <dbReference type="HAMAP-Rule" id="MF_00658"/>
    </source>
</evidence>
<organism>
    <name type="scientific">Marinomonas sp. (strain MWYL1)</name>
    <dbReference type="NCBI Taxonomy" id="400668"/>
    <lineage>
        <taxon>Bacteria</taxon>
        <taxon>Pseudomonadati</taxon>
        <taxon>Pseudomonadota</taxon>
        <taxon>Gammaproteobacteria</taxon>
        <taxon>Oceanospirillales</taxon>
        <taxon>Oceanospirillaceae</taxon>
        <taxon>Marinomonas</taxon>
    </lineage>
</organism>
<sequence>MRVRLIAVGNKMPKWVTEGYDEYAKRLPKDFALELVEIPMSPRGKNTDIPKAIRKEGDSMLEAIPSGDKVIAMEVLGKEWSTDQLADQTEQWRMDGYNVSLLVGGPDGLDPRCTARADQTWSLSRLTLPHPMVRVILAEQIYRAWTLMNNHPYHR</sequence>
<accession>A6VZ82</accession>
<proteinExistence type="inferred from homology"/>